<name>ATPE_PSEAB</name>
<reference key="1">
    <citation type="journal article" date="2006" name="Genome Biol.">
        <title>Genomic analysis reveals that Pseudomonas aeruginosa virulence is combinatorial.</title>
        <authorList>
            <person name="Lee D.G."/>
            <person name="Urbach J.M."/>
            <person name="Wu G."/>
            <person name="Liberati N.T."/>
            <person name="Feinbaum R.L."/>
            <person name="Miyata S."/>
            <person name="Diggins L.T."/>
            <person name="He J."/>
            <person name="Saucier M."/>
            <person name="Deziel E."/>
            <person name="Friedman L."/>
            <person name="Li L."/>
            <person name="Grills G."/>
            <person name="Montgomery K."/>
            <person name="Kucherlapati R."/>
            <person name="Rahme L.G."/>
            <person name="Ausubel F.M."/>
        </authorList>
    </citation>
    <scope>NUCLEOTIDE SEQUENCE [LARGE SCALE GENOMIC DNA]</scope>
    <source>
        <strain>UCBPP-PA14</strain>
    </source>
</reference>
<evidence type="ECO:0000255" key="1">
    <source>
        <dbReference type="HAMAP-Rule" id="MF_00530"/>
    </source>
</evidence>
<organism>
    <name type="scientific">Pseudomonas aeruginosa (strain UCBPP-PA14)</name>
    <dbReference type="NCBI Taxonomy" id="208963"/>
    <lineage>
        <taxon>Bacteria</taxon>
        <taxon>Pseudomonadati</taxon>
        <taxon>Pseudomonadota</taxon>
        <taxon>Gammaproteobacteria</taxon>
        <taxon>Pseudomonadales</taxon>
        <taxon>Pseudomonadaceae</taxon>
        <taxon>Pseudomonas</taxon>
    </lineage>
</organism>
<proteinExistence type="inferred from homology"/>
<dbReference type="EMBL" id="CP000438">
    <property type="protein sequence ID" value="ABJ14940.1"/>
    <property type="molecule type" value="Genomic_DNA"/>
</dbReference>
<dbReference type="RefSeq" id="WP_003097128.1">
    <property type="nucleotide sequence ID" value="NZ_CP034244.1"/>
</dbReference>
<dbReference type="SMR" id="Q02DF5"/>
<dbReference type="KEGG" id="pau:PA14_73230"/>
<dbReference type="PseudoCAP" id="PA14_73230"/>
<dbReference type="HOGENOM" id="CLU_084338_2_0_6"/>
<dbReference type="BioCyc" id="PAER208963:G1G74-6160-MONOMER"/>
<dbReference type="Proteomes" id="UP000000653">
    <property type="component" value="Chromosome"/>
</dbReference>
<dbReference type="GO" id="GO:0005886">
    <property type="term" value="C:plasma membrane"/>
    <property type="evidence" value="ECO:0007669"/>
    <property type="project" value="UniProtKB-SubCell"/>
</dbReference>
<dbReference type="GO" id="GO:0045259">
    <property type="term" value="C:proton-transporting ATP synthase complex"/>
    <property type="evidence" value="ECO:0007669"/>
    <property type="project" value="UniProtKB-KW"/>
</dbReference>
<dbReference type="GO" id="GO:0005524">
    <property type="term" value="F:ATP binding"/>
    <property type="evidence" value="ECO:0007669"/>
    <property type="project" value="UniProtKB-UniRule"/>
</dbReference>
<dbReference type="GO" id="GO:0046933">
    <property type="term" value="F:proton-transporting ATP synthase activity, rotational mechanism"/>
    <property type="evidence" value="ECO:0007669"/>
    <property type="project" value="UniProtKB-UniRule"/>
</dbReference>
<dbReference type="CDD" id="cd12152">
    <property type="entry name" value="F1-ATPase_delta"/>
    <property type="match status" value="1"/>
</dbReference>
<dbReference type="FunFam" id="2.60.15.10:FF:000001">
    <property type="entry name" value="ATP synthase epsilon chain"/>
    <property type="match status" value="1"/>
</dbReference>
<dbReference type="Gene3D" id="1.20.5.440">
    <property type="entry name" value="ATP synthase delta/epsilon subunit, C-terminal domain"/>
    <property type="match status" value="1"/>
</dbReference>
<dbReference type="Gene3D" id="2.60.15.10">
    <property type="entry name" value="F0F1 ATP synthase delta/epsilon subunit, N-terminal"/>
    <property type="match status" value="1"/>
</dbReference>
<dbReference type="HAMAP" id="MF_00530">
    <property type="entry name" value="ATP_synth_epsil_bac"/>
    <property type="match status" value="1"/>
</dbReference>
<dbReference type="InterPro" id="IPR036794">
    <property type="entry name" value="ATP_F1_dsu/esu_C_sf"/>
</dbReference>
<dbReference type="InterPro" id="IPR001469">
    <property type="entry name" value="ATP_synth_F1_dsu/esu"/>
</dbReference>
<dbReference type="InterPro" id="IPR020546">
    <property type="entry name" value="ATP_synth_F1_dsu/esu_N"/>
</dbReference>
<dbReference type="InterPro" id="IPR020547">
    <property type="entry name" value="ATP_synth_F1_esu_C"/>
</dbReference>
<dbReference type="InterPro" id="IPR036771">
    <property type="entry name" value="ATPsynth_dsu/esu_N"/>
</dbReference>
<dbReference type="NCBIfam" id="TIGR01216">
    <property type="entry name" value="ATP_synt_epsi"/>
    <property type="match status" value="1"/>
</dbReference>
<dbReference type="NCBIfam" id="NF001847">
    <property type="entry name" value="PRK00571.1-4"/>
    <property type="match status" value="1"/>
</dbReference>
<dbReference type="PANTHER" id="PTHR13822">
    <property type="entry name" value="ATP SYNTHASE DELTA/EPSILON CHAIN"/>
    <property type="match status" value="1"/>
</dbReference>
<dbReference type="PANTHER" id="PTHR13822:SF10">
    <property type="entry name" value="ATP SYNTHASE EPSILON CHAIN, CHLOROPLASTIC"/>
    <property type="match status" value="1"/>
</dbReference>
<dbReference type="Pfam" id="PF00401">
    <property type="entry name" value="ATP-synt_DE"/>
    <property type="match status" value="1"/>
</dbReference>
<dbReference type="Pfam" id="PF02823">
    <property type="entry name" value="ATP-synt_DE_N"/>
    <property type="match status" value="1"/>
</dbReference>
<dbReference type="SUPFAM" id="SSF46604">
    <property type="entry name" value="Epsilon subunit of F1F0-ATP synthase C-terminal domain"/>
    <property type="match status" value="1"/>
</dbReference>
<dbReference type="SUPFAM" id="SSF51344">
    <property type="entry name" value="Epsilon subunit of F1F0-ATP synthase N-terminal domain"/>
    <property type="match status" value="1"/>
</dbReference>
<gene>
    <name evidence="1" type="primary">atpC</name>
    <name type="ordered locus">PA14_73230</name>
</gene>
<keyword id="KW-0066">ATP synthesis</keyword>
<keyword id="KW-0997">Cell inner membrane</keyword>
<keyword id="KW-1003">Cell membrane</keyword>
<keyword id="KW-0139">CF(1)</keyword>
<keyword id="KW-0375">Hydrogen ion transport</keyword>
<keyword id="KW-0406">Ion transport</keyword>
<keyword id="KW-0472">Membrane</keyword>
<keyword id="KW-0813">Transport</keyword>
<protein>
    <recommendedName>
        <fullName evidence="1">ATP synthase epsilon chain</fullName>
    </recommendedName>
    <alternativeName>
        <fullName evidence="1">ATP synthase F1 sector epsilon subunit</fullName>
    </alternativeName>
    <alternativeName>
        <fullName evidence="1">F-ATPase epsilon subunit</fullName>
    </alternativeName>
</protein>
<accession>Q02DF5</accession>
<sequence>MAITVHCDIVSAEAEIFSGLVEMVIAHGALGDLGIAPGHAPLITDLKPGPIRLVKQGGEQEVYYISGGFLEVQPNMVKVLADTVVRAGDLDEAAAQEALKAAEKALQGKGAEFDYSAAAARLAEAAAQLRTVQQLRKKFGG</sequence>
<comment type="function">
    <text evidence="1">Produces ATP from ADP in the presence of a proton gradient across the membrane.</text>
</comment>
<comment type="subunit">
    <text evidence="1">F-type ATPases have 2 components, CF(1) - the catalytic core - and CF(0) - the membrane proton channel. CF(1) has five subunits: alpha(3), beta(3), gamma(1), delta(1), epsilon(1). CF(0) has three main subunits: a, b and c.</text>
</comment>
<comment type="subcellular location">
    <subcellularLocation>
        <location evidence="1">Cell inner membrane</location>
        <topology evidence="1">Peripheral membrane protein</topology>
    </subcellularLocation>
</comment>
<comment type="similarity">
    <text evidence="1">Belongs to the ATPase epsilon chain family.</text>
</comment>
<feature type="chain" id="PRO_1000056521" description="ATP synthase epsilon chain">
    <location>
        <begin position="1"/>
        <end position="141"/>
    </location>
</feature>